<protein>
    <recommendedName>
        <fullName evidence="1">Orotate phosphoribosyltransferase</fullName>
        <shortName evidence="1">OPRT</shortName>
        <shortName evidence="1">OPRTase</shortName>
        <ecNumber evidence="1">2.4.2.10</ecNumber>
    </recommendedName>
</protein>
<proteinExistence type="inferred from homology"/>
<reference key="1">
    <citation type="journal article" date="2000" name="Nature">
        <title>Genome sequence of the endocellular bacterial symbiont of aphids Buchnera sp. APS.</title>
        <authorList>
            <person name="Shigenobu S."/>
            <person name="Watanabe H."/>
            <person name="Hattori M."/>
            <person name="Sakaki Y."/>
            <person name="Ishikawa H."/>
        </authorList>
    </citation>
    <scope>NUCLEOTIDE SEQUENCE [LARGE SCALE GENOMIC DNA]</scope>
    <source>
        <strain>APS</strain>
    </source>
</reference>
<sequence length="213" mass="24610">MDWKKEFIDFSFKKKVLKFGVFQLKSGRISPYFFNSGLLSTGIDIIKIGLFYARSIIDSKNKFDVLFGPAYKGIPIAVATSIALKNHYNLNVPYSFNRKEYKEHGEKGDLIGSTIYKKRVIILDDVITSGTAIHHSIKIIEKQEASISSIFVLLDRKEKGIRKLSTINHFRNQKSYKIISIITIDDLIEYVLEDKKLKEHIPQLIKYREKYGI</sequence>
<gene>
    <name evidence="1" type="primary">pyrE</name>
    <name type="ordered locus">BU559</name>
</gene>
<comment type="function">
    <text evidence="1">Catalyzes the transfer of a ribosyl phosphate group from 5-phosphoribose 1-diphosphate to orotate, leading to the formation of orotidine monophosphate (OMP).</text>
</comment>
<comment type="catalytic activity">
    <reaction evidence="1">
        <text>orotidine 5'-phosphate + diphosphate = orotate + 5-phospho-alpha-D-ribose 1-diphosphate</text>
        <dbReference type="Rhea" id="RHEA:10380"/>
        <dbReference type="ChEBI" id="CHEBI:30839"/>
        <dbReference type="ChEBI" id="CHEBI:33019"/>
        <dbReference type="ChEBI" id="CHEBI:57538"/>
        <dbReference type="ChEBI" id="CHEBI:58017"/>
        <dbReference type="EC" id="2.4.2.10"/>
    </reaction>
</comment>
<comment type="cofactor">
    <cofactor evidence="1">
        <name>Mg(2+)</name>
        <dbReference type="ChEBI" id="CHEBI:18420"/>
    </cofactor>
</comment>
<comment type="pathway">
    <text evidence="1">Pyrimidine metabolism; UMP biosynthesis via de novo pathway; UMP from orotate: step 1/2.</text>
</comment>
<comment type="subunit">
    <text evidence="1">Homodimer.</text>
</comment>
<comment type="similarity">
    <text evidence="1">Belongs to the purine/pyrimidine phosphoribosyltransferase family. PyrE subfamily.</text>
</comment>
<evidence type="ECO:0000255" key="1">
    <source>
        <dbReference type="HAMAP-Rule" id="MF_01208"/>
    </source>
</evidence>
<dbReference type="EC" id="2.4.2.10" evidence="1"/>
<dbReference type="EMBL" id="BA000003">
    <property type="protein sequence ID" value="BAB13249.1"/>
    <property type="molecule type" value="Genomic_DNA"/>
</dbReference>
<dbReference type="RefSeq" id="NP_240363.1">
    <property type="nucleotide sequence ID" value="NC_002528.1"/>
</dbReference>
<dbReference type="RefSeq" id="WP_009874507.1">
    <property type="nucleotide sequence ID" value="NZ_AP036055.1"/>
</dbReference>
<dbReference type="SMR" id="P57622"/>
<dbReference type="STRING" id="563178.BUAP5A_552"/>
<dbReference type="EnsemblBacteria" id="BAB13249">
    <property type="protein sequence ID" value="BAB13249"/>
    <property type="gene ID" value="BAB13249"/>
</dbReference>
<dbReference type="KEGG" id="buc:BU559"/>
<dbReference type="PATRIC" id="fig|107806.10.peg.562"/>
<dbReference type="eggNOG" id="COG0461">
    <property type="taxonomic scope" value="Bacteria"/>
</dbReference>
<dbReference type="HOGENOM" id="CLU_074878_0_1_6"/>
<dbReference type="UniPathway" id="UPA00070">
    <property type="reaction ID" value="UER00119"/>
</dbReference>
<dbReference type="Proteomes" id="UP000001806">
    <property type="component" value="Chromosome"/>
</dbReference>
<dbReference type="GO" id="GO:0005737">
    <property type="term" value="C:cytoplasm"/>
    <property type="evidence" value="ECO:0007669"/>
    <property type="project" value="TreeGrafter"/>
</dbReference>
<dbReference type="GO" id="GO:0000287">
    <property type="term" value="F:magnesium ion binding"/>
    <property type="evidence" value="ECO:0007669"/>
    <property type="project" value="UniProtKB-UniRule"/>
</dbReference>
<dbReference type="GO" id="GO:0004588">
    <property type="term" value="F:orotate phosphoribosyltransferase activity"/>
    <property type="evidence" value="ECO:0007669"/>
    <property type="project" value="UniProtKB-UniRule"/>
</dbReference>
<dbReference type="GO" id="GO:0006207">
    <property type="term" value="P:'de novo' pyrimidine nucleobase biosynthetic process"/>
    <property type="evidence" value="ECO:0007669"/>
    <property type="project" value="TreeGrafter"/>
</dbReference>
<dbReference type="GO" id="GO:0044205">
    <property type="term" value="P:'de novo' UMP biosynthetic process"/>
    <property type="evidence" value="ECO:0007669"/>
    <property type="project" value="UniProtKB-UniRule"/>
</dbReference>
<dbReference type="GO" id="GO:0046132">
    <property type="term" value="P:pyrimidine ribonucleoside biosynthetic process"/>
    <property type="evidence" value="ECO:0007669"/>
    <property type="project" value="TreeGrafter"/>
</dbReference>
<dbReference type="CDD" id="cd06223">
    <property type="entry name" value="PRTases_typeI"/>
    <property type="match status" value="1"/>
</dbReference>
<dbReference type="FunFam" id="3.40.50.2020:FF:000008">
    <property type="entry name" value="Orotate phosphoribosyltransferase"/>
    <property type="match status" value="1"/>
</dbReference>
<dbReference type="Gene3D" id="3.40.50.2020">
    <property type="match status" value="1"/>
</dbReference>
<dbReference type="HAMAP" id="MF_01208">
    <property type="entry name" value="PyrE"/>
    <property type="match status" value="1"/>
</dbReference>
<dbReference type="InterPro" id="IPR023031">
    <property type="entry name" value="OPRT"/>
</dbReference>
<dbReference type="InterPro" id="IPR004467">
    <property type="entry name" value="Or_phspho_trans_dom"/>
</dbReference>
<dbReference type="InterPro" id="IPR000836">
    <property type="entry name" value="PRibTrfase_dom"/>
</dbReference>
<dbReference type="InterPro" id="IPR029057">
    <property type="entry name" value="PRTase-like"/>
</dbReference>
<dbReference type="NCBIfam" id="TIGR00336">
    <property type="entry name" value="pyrE"/>
    <property type="match status" value="1"/>
</dbReference>
<dbReference type="PANTHER" id="PTHR46683">
    <property type="entry name" value="OROTATE PHOSPHORIBOSYLTRANSFERASE 1-RELATED"/>
    <property type="match status" value="1"/>
</dbReference>
<dbReference type="PANTHER" id="PTHR46683:SF1">
    <property type="entry name" value="OROTATE PHOSPHORIBOSYLTRANSFERASE 1-RELATED"/>
    <property type="match status" value="1"/>
</dbReference>
<dbReference type="Pfam" id="PF00156">
    <property type="entry name" value="Pribosyltran"/>
    <property type="match status" value="1"/>
</dbReference>
<dbReference type="SUPFAM" id="SSF53271">
    <property type="entry name" value="PRTase-like"/>
    <property type="match status" value="1"/>
</dbReference>
<dbReference type="PROSITE" id="PS00103">
    <property type="entry name" value="PUR_PYR_PR_TRANSFER"/>
    <property type="match status" value="1"/>
</dbReference>
<keyword id="KW-0328">Glycosyltransferase</keyword>
<keyword id="KW-0460">Magnesium</keyword>
<keyword id="KW-0665">Pyrimidine biosynthesis</keyword>
<keyword id="KW-1185">Reference proteome</keyword>
<keyword id="KW-0808">Transferase</keyword>
<accession>P57622</accession>
<organism>
    <name type="scientific">Buchnera aphidicola subsp. Acyrthosiphon pisum (strain APS)</name>
    <name type="common">Acyrthosiphon pisum symbiotic bacterium</name>
    <dbReference type="NCBI Taxonomy" id="107806"/>
    <lineage>
        <taxon>Bacteria</taxon>
        <taxon>Pseudomonadati</taxon>
        <taxon>Pseudomonadota</taxon>
        <taxon>Gammaproteobacteria</taxon>
        <taxon>Enterobacterales</taxon>
        <taxon>Erwiniaceae</taxon>
        <taxon>Buchnera</taxon>
    </lineage>
</organism>
<name>PYRE_BUCAI</name>
<feature type="chain" id="PRO_0000110681" description="Orotate phosphoribosyltransferase">
    <location>
        <begin position="1"/>
        <end position="213"/>
    </location>
</feature>
<feature type="binding site" description="in other chain" evidence="1">
    <location>
        <position position="25"/>
    </location>
    <ligand>
        <name>5-phospho-alpha-D-ribose 1-diphosphate</name>
        <dbReference type="ChEBI" id="CHEBI:58017"/>
        <note>ligand shared between dimeric partners</note>
    </ligand>
</feature>
<feature type="binding site" evidence="1">
    <location>
        <begin position="33"/>
        <end position="34"/>
    </location>
    <ligand>
        <name>orotate</name>
        <dbReference type="ChEBI" id="CHEBI:30839"/>
    </ligand>
</feature>
<feature type="binding site" description="in other chain" evidence="1">
    <location>
        <begin position="71"/>
        <end position="72"/>
    </location>
    <ligand>
        <name>5-phospho-alpha-D-ribose 1-diphosphate</name>
        <dbReference type="ChEBI" id="CHEBI:58017"/>
        <note>ligand shared between dimeric partners</note>
    </ligand>
</feature>
<feature type="binding site" evidence="1">
    <location>
        <position position="98"/>
    </location>
    <ligand>
        <name>5-phospho-alpha-D-ribose 1-diphosphate</name>
        <dbReference type="ChEBI" id="CHEBI:58017"/>
        <note>ligand shared between dimeric partners</note>
    </ligand>
</feature>
<feature type="binding site" description="in other chain" evidence="1">
    <location>
        <position position="99"/>
    </location>
    <ligand>
        <name>5-phospho-alpha-D-ribose 1-diphosphate</name>
        <dbReference type="ChEBI" id="CHEBI:58017"/>
        <note>ligand shared between dimeric partners</note>
    </ligand>
</feature>
<feature type="binding site" evidence="1">
    <location>
        <position position="102"/>
    </location>
    <ligand>
        <name>5-phospho-alpha-D-ribose 1-diphosphate</name>
        <dbReference type="ChEBI" id="CHEBI:58017"/>
        <note>ligand shared between dimeric partners</note>
    </ligand>
</feature>
<feature type="binding site" evidence="1">
    <location>
        <position position="104"/>
    </location>
    <ligand>
        <name>5-phospho-alpha-D-ribose 1-diphosphate</name>
        <dbReference type="ChEBI" id="CHEBI:58017"/>
        <note>ligand shared between dimeric partners</note>
    </ligand>
</feature>
<feature type="binding site" description="in other chain" evidence="1">
    <location>
        <begin position="124"/>
        <end position="132"/>
    </location>
    <ligand>
        <name>5-phospho-alpha-D-ribose 1-diphosphate</name>
        <dbReference type="ChEBI" id="CHEBI:58017"/>
        <note>ligand shared between dimeric partners</note>
    </ligand>
</feature>
<feature type="binding site" evidence="1">
    <location>
        <position position="128"/>
    </location>
    <ligand>
        <name>orotate</name>
        <dbReference type="ChEBI" id="CHEBI:30839"/>
    </ligand>
</feature>
<feature type="binding site" evidence="1">
    <location>
        <position position="156"/>
    </location>
    <ligand>
        <name>orotate</name>
        <dbReference type="ChEBI" id="CHEBI:30839"/>
    </ligand>
</feature>